<proteinExistence type="inferred from homology"/>
<sequence length="304" mass="33216">MSWIERIKSNITPTRKASIPEGVWTKCDSCGQVLYRAELERNLEVCPKCDHHMRMSARNRLHSLLDEGSLVELGSELEPKDVLKFRDSKKYKDRLASAQKETGEKDALVVMKGTLHGMPVVAAAFEFAFMGGSMGSVVGARFVRAVEQALEDNCPLVCFSASGGARMQEALMSLMQMAKTSAALAKMQERGLPYISVLTDPTMGGVSASFAMLGDLNIAEPKALIGFAGPRVIEQTVREKLPPGFQRSEFLIEKGAIDMIVRRPEMRLKLASILAKLMNLPAPNPDAPREGVVVPPAPDQESEA</sequence>
<dbReference type="EC" id="2.1.3.15" evidence="1"/>
<dbReference type="EMBL" id="AE006468">
    <property type="protein sequence ID" value="AAL21267.1"/>
    <property type="molecule type" value="Genomic_DNA"/>
</dbReference>
<dbReference type="RefSeq" id="NP_461308.1">
    <property type="nucleotide sequence ID" value="NC_003197.2"/>
</dbReference>
<dbReference type="RefSeq" id="WP_000118383.1">
    <property type="nucleotide sequence ID" value="NC_003197.2"/>
</dbReference>
<dbReference type="SMR" id="Q7CQ41"/>
<dbReference type="STRING" id="99287.STM2366"/>
<dbReference type="PaxDb" id="99287-STM2366"/>
<dbReference type="GeneID" id="1253888"/>
<dbReference type="KEGG" id="stm:STM2366"/>
<dbReference type="PATRIC" id="fig|99287.12.peg.2505"/>
<dbReference type="HOGENOM" id="CLU_015486_1_0_6"/>
<dbReference type="OMA" id="PEGLWIK"/>
<dbReference type="PhylomeDB" id="Q7CQ41"/>
<dbReference type="BioCyc" id="SENT99287:STM2366-MONOMER"/>
<dbReference type="UniPathway" id="UPA00655">
    <property type="reaction ID" value="UER00711"/>
</dbReference>
<dbReference type="Proteomes" id="UP000001014">
    <property type="component" value="Chromosome"/>
</dbReference>
<dbReference type="GO" id="GO:0009329">
    <property type="term" value="C:acetate CoA-transferase complex"/>
    <property type="evidence" value="ECO:0000318"/>
    <property type="project" value="GO_Central"/>
</dbReference>
<dbReference type="GO" id="GO:0003989">
    <property type="term" value="F:acetyl-CoA carboxylase activity"/>
    <property type="evidence" value="ECO:0007669"/>
    <property type="project" value="InterPro"/>
</dbReference>
<dbReference type="GO" id="GO:0005524">
    <property type="term" value="F:ATP binding"/>
    <property type="evidence" value="ECO:0007669"/>
    <property type="project" value="UniProtKB-KW"/>
</dbReference>
<dbReference type="GO" id="GO:0016743">
    <property type="term" value="F:carboxyl- or carbamoyltransferase activity"/>
    <property type="evidence" value="ECO:0007669"/>
    <property type="project" value="UniProtKB-UniRule"/>
</dbReference>
<dbReference type="GO" id="GO:0008270">
    <property type="term" value="F:zinc ion binding"/>
    <property type="evidence" value="ECO:0007669"/>
    <property type="project" value="UniProtKB-UniRule"/>
</dbReference>
<dbReference type="GO" id="GO:0006633">
    <property type="term" value="P:fatty acid biosynthetic process"/>
    <property type="evidence" value="ECO:0000318"/>
    <property type="project" value="GO_Central"/>
</dbReference>
<dbReference type="GO" id="GO:2001295">
    <property type="term" value="P:malonyl-CoA biosynthetic process"/>
    <property type="evidence" value="ECO:0000318"/>
    <property type="project" value="GO_Central"/>
</dbReference>
<dbReference type="GO" id="GO:0017148">
    <property type="term" value="P:negative regulation of translation"/>
    <property type="evidence" value="ECO:0000318"/>
    <property type="project" value="GO_Central"/>
</dbReference>
<dbReference type="FunFam" id="3.90.226.10:FF:000013">
    <property type="entry name" value="Acetyl-coenzyme A carboxylase carboxyl transferase subunit beta"/>
    <property type="match status" value="1"/>
</dbReference>
<dbReference type="Gene3D" id="3.90.226.10">
    <property type="entry name" value="2-enoyl-CoA Hydratase, Chain A, domain 1"/>
    <property type="match status" value="1"/>
</dbReference>
<dbReference type="HAMAP" id="MF_01395">
    <property type="entry name" value="AcetylCoA_CT_beta"/>
    <property type="match status" value="1"/>
</dbReference>
<dbReference type="InterPro" id="IPR034733">
    <property type="entry name" value="AcCoA_carboxyl_beta"/>
</dbReference>
<dbReference type="InterPro" id="IPR000438">
    <property type="entry name" value="Acetyl_CoA_COase_Trfase_b_su"/>
</dbReference>
<dbReference type="InterPro" id="IPR029045">
    <property type="entry name" value="ClpP/crotonase-like_dom_sf"/>
</dbReference>
<dbReference type="InterPro" id="IPR011762">
    <property type="entry name" value="COA_CT_N"/>
</dbReference>
<dbReference type="InterPro" id="IPR041010">
    <property type="entry name" value="Znf-ACC"/>
</dbReference>
<dbReference type="NCBIfam" id="TIGR00515">
    <property type="entry name" value="accD"/>
    <property type="match status" value="1"/>
</dbReference>
<dbReference type="PANTHER" id="PTHR42995">
    <property type="entry name" value="ACETYL-COENZYME A CARBOXYLASE CARBOXYL TRANSFERASE SUBUNIT BETA, CHLOROPLASTIC"/>
    <property type="match status" value="1"/>
</dbReference>
<dbReference type="PANTHER" id="PTHR42995:SF5">
    <property type="entry name" value="ACETYL-COENZYME A CARBOXYLASE CARBOXYL TRANSFERASE SUBUNIT BETA, CHLOROPLASTIC"/>
    <property type="match status" value="1"/>
</dbReference>
<dbReference type="Pfam" id="PF01039">
    <property type="entry name" value="Carboxyl_trans"/>
    <property type="match status" value="1"/>
</dbReference>
<dbReference type="Pfam" id="PF17848">
    <property type="entry name" value="Zn_ribbon_ACC"/>
    <property type="match status" value="1"/>
</dbReference>
<dbReference type="PRINTS" id="PR01070">
    <property type="entry name" value="ACCCTRFRASEB"/>
</dbReference>
<dbReference type="SUPFAM" id="SSF52096">
    <property type="entry name" value="ClpP/crotonase"/>
    <property type="match status" value="1"/>
</dbReference>
<dbReference type="PROSITE" id="PS50980">
    <property type="entry name" value="COA_CT_NTER"/>
    <property type="match status" value="1"/>
</dbReference>
<gene>
    <name evidence="1" type="primary">accD</name>
    <name type="ordered locus">STM2366</name>
</gene>
<organism>
    <name type="scientific">Salmonella typhimurium (strain LT2 / SGSC1412 / ATCC 700720)</name>
    <dbReference type="NCBI Taxonomy" id="99287"/>
    <lineage>
        <taxon>Bacteria</taxon>
        <taxon>Pseudomonadati</taxon>
        <taxon>Pseudomonadota</taxon>
        <taxon>Gammaproteobacteria</taxon>
        <taxon>Enterobacterales</taxon>
        <taxon>Enterobacteriaceae</taxon>
        <taxon>Salmonella</taxon>
    </lineage>
</organism>
<protein>
    <recommendedName>
        <fullName evidence="1">Acetyl-coenzyme A carboxylase carboxyl transferase subunit beta</fullName>
        <shortName evidence="1">ACCase subunit beta</shortName>
        <shortName evidence="1">Acetyl-CoA carboxylase carboxyltransferase subunit beta</shortName>
        <ecNumber evidence="1">2.1.3.15</ecNumber>
    </recommendedName>
</protein>
<reference key="1">
    <citation type="journal article" date="2001" name="Nature">
        <title>Complete genome sequence of Salmonella enterica serovar Typhimurium LT2.</title>
        <authorList>
            <person name="McClelland M."/>
            <person name="Sanderson K.E."/>
            <person name="Spieth J."/>
            <person name="Clifton S.W."/>
            <person name="Latreille P."/>
            <person name="Courtney L."/>
            <person name="Porwollik S."/>
            <person name="Ali J."/>
            <person name="Dante M."/>
            <person name="Du F."/>
            <person name="Hou S."/>
            <person name="Layman D."/>
            <person name="Leonard S."/>
            <person name="Nguyen C."/>
            <person name="Scott K."/>
            <person name="Holmes A."/>
            <person name="Grewal N."/>
            <person name="Mulvaney E."/>
            <person name="Ryan E."/>
            <person name="Sun H."/>
            <person name="Florea L."/>
            <person name="Miller W."/>
            <person name="Stoneking T."/>
            <person name="Nhan M."/>
            <person name="Waterston R."/>
            <person name="Wilson R.K."/>
        </authorList>
    </citation>
    <scope>NUCLEOTIDE SEQUENCE [LARGE SCALE GENOMIC DNA]</scope>
    <source>
        <strain>LT2 / SGSC1412 / ATCC 700720</strain>
    </source>
</reference>
<keyword id="KW-0067">ATP-binding</keyword>
<keyword id="KW-0963">Cytoplasm</keyword>
<keyword id="KW-0275">Fatty acid biosynthesis</keyword>
<keyword id="KW-0276">Fatty acid metabolism</keyword>
<keyword id="KW-0444">Lipid biosynthesis</keyword>
<keyword id="KW-0443">Lipid metabolism</keyword>
<keyword id="KW-0479">Metal-binding</keyword>
<keyword id="KW-0547">Nucleotide-binding</keyword>
<keyword id="KW-1185">Reference proteome</keyword>
<keyword id="KW-0808">Transferase</keyword>
<keyword id="KW-0862">Zinc</keyword>
<keyword id="KW-0863">Zinc-finger</keyword>
<name>ACCD_SALTY</name>
<evidence type="ECO:0000255" key="1">
    <source>
        <dbReference type="HAMAP-Rule" id="MF_01395"/>
    </source>
</evidence>
<evidence type="ECO:0000255" key="2">
    <source>
        <dbReference type="PROSITE-ProRule" id="PRU01136"/>
    </source>
</evidence>
<evidence type="ECO:0000256" key="3">
    <source>
        <dbReference type="SAM" id="MobiDB-lite"/>
    </source>
</evidence>
<comment type="function">
    <text evidence="1">Component of the acetyl coenzyme A carboxylase (ACC) complex. Biotin carboxylase (BC) catalyzes the carboxylation of biotin on its carrier protein (BCCP) and then the CO(2) group is transferred by the transcarboxylase to acetyl-CoA to form malonyl-CoA.</text>
</comment>
<comment type="catalytic activity">
    <reaction evidence="1">
        <text>N(6)-carboxybiotinyl-L-lysyl-[protein] + acetyl-CoA = N(6)-biotinyl-L-lysyl-[protein] + malonyl-CoA</text>
        <dbReference type="Rhea" id="RHEA:54728"/>
        <dbReference type="Rhea" id="RHEA-COMP:10505"/>
        <dbReference type="Rhea" id="RHEA-COMP:10506"/>
        <dbReference type="ChEBI" id="CHEBI:57288"/>
        <dbReference type="ChEBI" id="CHEBI:57384"/>
        <dbReference type="ChEBI" id="CHEBI:83144"/>
        <dbReference type="ChEBI" id="CHEBI:83145"/>
        <dbReference type="EC" id="2.1.3.15"/>
    </reaction>
</comment>
<comment type="cofactor">
    <cofactor evidence="1">
        <name>Zn(2+)</name>
        <dbReference type="ChEBI" id="CHEBI:29105"/>
    </cofactor>
    <text evidence="1">Binds 1 zinc ion per subunit.</text>
</comment>
<comment type="pathway">
    <text evidence="1">Lipid metabolism; malonyl-CoA biosynthesis; malonyl-CoA from acetyl-CoA: step 1/1.</text>
</comment>
<comment type="subunit">
    <text evidence="1">Acetyl-CoA carboxylase is a heterohexamer composed of biotin carboxyl carrier protein (AccB), biotin carboxylase (AccC) and two subunits each of ACCase subunit alpha (AccA) and ACCase subunit beta (AccD).</text>
</comment>
<comment type="subcellular location">
    <subcellularLocation>
        <location evidence="1">Cytoplasm</location>
    </subcellularLocation>
</comment>
<comment type="similarity">
    <text evidence="1">Belongs to the AccD/PCCB family.</text>
</comment>
<feature type="chain" id="PRO_0000359061" description="Acetyl-coenzyme A carboxylase carboxyl transferase subunit beta">
    <location>
        <begin position="1"/>
        <end position="304"/>
    </location>
</feature>
<feature type="domain" description="CoA carboxyltransferase N-terminal" evidence="2">
    <location>
        <begin position="23"/>
        <end position="292"/>
    </location>
</feature>
<feature type="zinc finger region" description="C4-type" evidence="1">
    <location>
        <begin position="27"/>
        <end position="49"/>
    </location>
</feature>
<feature type="region of interest" description="Disordered" evidence="3">
    <location>
        <begin position="283"/>
        <end position="304"/>
    </location>
</feature>
<feature type="binding site" evidence="1">
    <location>
        <position position="27"/>
    </location>
    <ligand>
        <name>Zn(2+)</name>
        <dbReference type="ChEBI" id="CHEBI:29105"/>
    </ligand>
</feature>
<feature type="binding site" evidence="1">
    <location>
        <position position="30"/>
    </location>
    <ligand>
        <name>Zn(2+)</name>
        <dbReference type="ChEBI" id="CHEBI:29105"/>
    </ligand>
</feature>
<feature type="binding site" evidence="1">
    <location>
        <position position="46"/>
    </location>
    <ligand>
        <name>Zn(2+)</name>
        <dbReference type="ChEBI" id="CHEBI:29105"/>
    </ligand>
</feature>
<feature type="binding site" evidence="1">
    <location>
        <position position="49"/>
    </location>
    <ligand>
        <name>Zn(2+)</name>
        <dbReference type="ChEBI" id="CHEBI:29105"/>
    </ligand>
</feature>
<accession>Q7CQ41</accession>